<evidence type="ECO:0000255" key="1">
    <source>
        <dbReference type="HAMAP-Rule" id="MF_00870"/>
    </source>
</evidence>
<evidence type="ECO:0000269" key="2">
    <source>
    </source>
</evidence>
<evidence type="ECO:0000303" key="3">
    <source>
    </source>
</evidence>
<evidence type="ECO:0000305" key="4"/>
<evidence type="ECO:0000305" key="5">
    <source>
    </source>
</evidence>
<evidence type="ECO:0000312" key="6">
    <source>
        <dbReference type="EMBL" id="BAD85617.1"/>
    </source>
</evidence>
<evidence type="ECO:0007829" key="7">
    <source>
        <dbReference type="PDB" id="9BCU"/>
    </source>
</evidence>
<proteinExistence type="evidence at protein level"/>
<gene>
    <name evidence="1 4" type="primary">fttA</name>
    <name evidence="6" type="ordered locus">TK1428</name>
</gene>
<name>FTTA_THEKO</name>
<sequence length="648" mass="73504">MIRRETFVDDILKEIREIIVQMVPREAGITDVEFEGPELVIYVKNPEAMMKDGELIKNLAKVLKKRISVRPDPDILLPPEKAEELIKQLVPPEAEITNISFDPSVGEVLIEARKPGLVIGKNGETLRLITQKVHWAPRVVRTPPIQSQTIYSIRSILQTESKDRRKFLRQVGRNIYRKSEYKSRWIRITGLGGFREVGRSALLVQTDESYVLVDFGVNIAALKDPTKAYPHFDAPEFRYVLDEGLLDAIIITHAHLDHSGMLPYLFRYKLFDGPIYTTPPTRDLMTLLQQDFIEIQHMNGVEPLYRPKDIKEVIKHTITLDYGEVRDIAPDIRLTLHNAGHILGSSIVHLHIGNGLHNIAITGDFKFIPTRLFEPAVSRFPRLETLVMESTYGGSNDYQMPREEAEKRLIEVIHQTLKRGGKVLIPAMAVGRAQEIMMVLEEYARVGGIEVPIYLDGMIWEATAIHTAYPEYLSKHIREQIFHEGYNPFLNPIFKSVANSRERQDIIDSGEPAIIIATSGMLVGGPSVEYFKQLAPDPKNSIIFVSYQAEGTLGRQVQRGLREIPIVGEDGRTEVINVNMEVHTIDGFSGHADRRELMSYVARVRPRPERIITVHGEAHKCLDLSSSIHKKFGISTRAPNNLDAIRLK</sequence>
<keyword id="KW-0002">3D-structure</keyword>
<keyword id="KW-0238">DNA-binding</keyword>
<keyword id="KW-0255">Endonuclease</keyword>
<keyword id="KW-0269">Exonuclease</keyword>
<keyword id="KW-0378">Hydrolase</keyword>
<keyword id="KW-0479">Metal-binding</keyword>
<keyword id="KW-0540">Nuclease</keyword>
<keyword id="KW-1185">Reference proteome</keyword>
<keyword id="KW-0694">RNA-binding</keyword>
<keyword id="KW-0804">Transcription</keyword>
<keyword id="KW-0805">Transcription regulation</keyword>
<keyword id="KW-0806">Transcription termination</keyword>
<keyword id="KW-0862">Zinc</keyword>
<reference evidence="6" key="1">
    <citation type="journal article" date="2005" name="Genome Res.">
        <title>Complete genome sequence of the hyperthermophilic archaeon Thermococcus kodakaraensis KOD1 and comparison with Pyrococcus genomes.</title>
        <authorList>
            <person name="Fukui T."/>
            <person name="Atomi H."/>
            <person name="Kanai T."/>
            <person name="Matsumi R."/>
            <person name="Fujiwara S."/>
            <person name="Imanaka T."/>
        </authorList>
    </citation>
    <scope>NUCLEOTIDE SEQUENCE [LARGE SCALE GENOMIC DNA]</scope>
    <source>
        <strain>ATCC BAA-918 / JCM 12380 / KOD1</strain>
    </source>
</reference>
<reference key="2">
    <citation type="journal article" date="2020" name="Nat. Microbiol.">
        <title>FttA is a CPSF73 homologue that terminates transcription in Archaea.</title>
        <authorList>
            <person name="Sanders T.J."/>
            <person name="Wenck B.R."/>
            <person name="Selan J.N."/>
            <person name="Barker M.P."/>
            <person name="Trimmer S.A."/>
            <person name="Walker J.E."/>
            <person name="Santangelo T.J."/>
        </authorList>
    </citation>
    <scope>FUNCTION</scope>
    <scope>CATALYTIC ACTIVITY</scope>
    <scope>ACTIVITY REGULATION</scope>
    <scope>PROBABLE SUBUNIT</scope>
    <scope>RNA-BINDING</scope>
    <scope>DISRUPTION PHENOTYPE</scope>
    <scope>PROTEIN ABUNDANCE</scope>
    <scope>MUTAGENESIS OF HIS-255</scope>
    <source>
        <strain>ATCC BAA-918 / JCM 12380 / KOD1</strain>
    </source>
</reference>
<feature type="chain" id="PRO_0000460395" description="Transcription termination factor FttA">
    <location>
        <begin position="1"/>
        <end position="648"/>
    </location>
</feature>
<feature type="region of interest" description="KHa" evidence="1">
    <location>
        <begin position="9"/>
        <end position="76"/>
    </location>
</feature>
<feature type="region of interest" description="KHb" evidence="1">
    <location>
        <begin position="77"/>
        <end position="144"/>
    </location>
</feature>
<feature type="region of interest" description="Metallo-beta-lactamase N-terminus" evidence="1">
    <location>
        <begin position="185"/>
        <end position="395"/>
    </location>
</feature>
<feature type="region of interest" description="Beta-Casp" evidence="1">
    <location>
        <begin position="396"/>
        <end position="589"/>
    </location>
</feature>
<feature type="region of interest" description="Metallo-beta-lactamase C-terminus" evidence="1">
    <location>
        <begin position="590"/>
        <end position="648"/>
    </location>
</feature>
<feature type="binding site" evidence="1">
    <location>
        <position position="253"/>
    </location>
    <ligand>
        <name>Zn(2+)</name>
        <dbReference type="ChEBI" id="CHEBI:29105"/>
        <label>1</label>
    </ligand>
</feature>
<feature type="binding site" evidence="1">
    <location>
        <position position="255"/>
    </location>
    <ligand>
        <name>Zn(2+)</name>
        <dbReference type="ChEBI" id="CHEBI:29105"/>
        <label>1</label>
    </ligand>
</feature>
<feature type="binding site" evidence="1">
    <location>
        <position position="257"/>
    </location>
    <ligand>
        <name>Zn(2+)</name>
        <dbReference type="ChEBI" id="CHEBI:29105"/>
        <label>2</label>
    </ligand>
</feature>
<feature type="binding site" evidence="1">
    <location>
        <position position="258"/>
    </location>
    <ligand>
        <name>Zn(2+)</name>
        <dbReference type="ChEBI" id="CHEBI:29105"/>
        <label>2</label>
    </ligand>
</feature>
<feature type="binding site" evidence="1">
    <location>
        <position position="341"/>
    </location>
    <ligand>
        <name>Zn(2+)</name>
        <dbReference type="ChEBI" id="CHEBI:29105"/>
        <label>1</label>
    </ligand>
</feature>
<feature type="binding site" evidence="1">
    <location>
        <position position="364"/>
    </location>
    <ligand>
        <name>Zn(2+)</name>
        <dbReference type="ChEBI" id="CHEBI:29105"/>
        <label>1</label>
    </ligand>
</feature>
<feature type="binding site" evidence="1">
    <location>
        <position position="364"/>
    </location>
    <ligand>
        <name>Zn(2+)</name>
        <dbReference type="ChEBI" id="CHEBI:29105"/>
        <label>2</label>
    </ligand>
</feature>
<feature type="binding site" evidence="1">
    <location>
        <position position="615"/>
    </location>
    <ligand>
        <name>Zn(2+)</name>
        <dbReference type="ChEBI" id="CHEBI:29105"/>
        <label>2</label>
    </ligand>
</feature>
<feature type="mutagenesis site" description="Reduces transcription termination." evidence="2">
    <original>H</original>
    <variation>A</variation>
    <location>
        <position position="255"/>
    </location>
</feature>
<feature type="helix" evidence="7">
    <location>
        <begin position="8"/>
        <end position="22"/>
    </location>
</feature>
<feature type="helix" evidence="7">
    <location>
        <begin position="25"/>
        <end position="27"/>
    </location>
</feature>
<feature type="strand" evidence="7">
    <location>
        <begin position="29"/>
        <end position="35"/>
    </location>
</feature>
<feature type="strand" evidence="7">
    <location>
        <begin position="38"/>
        <end position="44"/>
    </location>
</feature>
<feature type="helix" evidence="7">
    <location>
        <begin position="46"/>
        <end position="49"/>
    </location>
</feature>
<feature type="helix" evidence="7">
    <location>
        <begin position="53"/>
        <end position="63"/>
    </location>
</feature>
<feature type="strand" evidence="7">
    <location>
        <begin position="65"/>
        <end position="71"/>
    </location>
</feature>
<feature type="helix" evidence="7">
    <location>
        <begin position="79"/>
        <end position="89"/>
    </location>
</feature>
<feature type="strand" evidence="7">
    <location>
        <begin position="96"/>
        <end position="101"/>
    </location>
</feature>
<feature type="strand" evidence="7">
    <location>
        <begin position="103"/>
        <end position="106"/>
    </location>
</feature>
<feature type="strand" evidence="7">
    <location>
        <begin position="108"/>
        <end position="113"/>
    </location>
</feature>
<feature type="helix" evidence="7">
    <location>
        <begin position="115"/>
        <end position="119"/>
    </location>
</feature>
<feature type="strand" evidence="7">
    <location>
        <begin position="121"/>
        <end position="123"/>
    </location>
</feature>
<feature type="helix" evidence="7">
    <location>
        <begin position="124"/>
        <end position="132"/>
    </location>
</feature>
<feature type="strand" evidence="7">
    <location>
        <begin position="137"/>
        <end position="141"/>
    </location>
</feature>
<feature type="helix" evidence="7">
    <location>
        <begin position="148"/>
        <end position="159"/>
    </location>
</feature>
<feature type="helix" evidence="7">
    <location>
        <begin position="161"/>
        <end position="175"/>
    </location>
</feature>
<feature type="strand" evidence="7">
    <location>
        <begin position="177"/>
        <end position="180"/>
    </location>
</feature>
<feature type="strand" evidence="7">
    <location>
        <begin position="186"/>
        <end position="192"/>
    </location>
</feature>
<feature type="strand" evidence="7">
    <location>
        <begin position="194"/>
        <end position="199"/>
    </location>
</feature>
<feature type="strand" evidence="7">
    <location>
        <begin position="201"/>
        <end position="208"/>
    </location>
</feature>
<feature type="strand" evidence="7">
    <location>
        <begin position="210"/>
        <end position="213"/>
    </location>
</feature>
<feature type="turn" evidence="7">
    <location>
        <begin position="220"/>
        <end position="223"/>
    </location>
</feature>
<feature type="helix" evidence="7">
    <location>
        <begin position="225"/>
        <end position="228"/>
    </location>
</feature>
<feature type="helix" evidence="7">
    <location>
        <begin position="235"/>
        <end position="243"/>
    </location>
</feature>
<feature type="strand" evidence="7">
    <location>
        <begin position="246"/>
        <end position="250"/>
    </location>
</feature>
<feature type="strand" evidence="7">
    <location>
        <begin position="252"/>
        <end position="255"/>
    </location>
</feature>
<feature type="helix" evidence="7">
    <location>
        <begin position="256"/>
        <end position="259"/>
    </location>
</feature>
<feature type="helix" evidence="7">
    <location>
        <begin position="262"/>
        <end position="267"/>
    </location>
</feature>
<feature type="strand" evidence="7">
    <location>
        <begin position="275"/>
        <end position="277"/>
    </location>
</feature>
<feature type="helix" evidence="7">
    <location>
        <begin position="279"/>
        <end position="298"/>
    </location>
</feature>
<feature type="helix" evidence="7">
    <location>
        <begin position="307"/>
        <end position="315"/>
    </location>
</feature>
<feature type="strand" evidence="7">
    <location>
        <begin position="317"/>
        <end position="319"/>
    </location>
</feature>
<feature type="strand" evidence="7">
    <location>
        <begin position="329"/>
        <end position="338"/>
    </location>
</feature>
<feature type="strand" evidence="7">
    <location>
        <begin position="346"/>
        <end position="352"/>
    </location>
</feature>
<feature type="turn" evidence="7">
    <location>
        <begin position="353"/>
        <end position="356"/>
    </location>
</feature>
<feature type="strand" evidence="7">
    <location>
        <begin position="357"/>
        <end position="361"/>
    </location>
</feature>
<feature type="strand" evidence="7">
    <location>
        <begin position="371"/>
        <end position="373"/>
    </location>
</feature>
<feature type="strand" evidence="7">
    <location>
        <begin position="384"/>
        <end position="389"/>
    </location>
</feature>
<feature type="strand" evidence="7">
    <location>
        <begin position="394"/>
        <end position="396"/>
    </location>
</feature>
<feature type="helix" evidence="7">
    <location>
        <begin position="402"/>
        <end position="418"/>
    </location>
</feature>
<feature type="strand" evidence="7">
    <location>
        <begin position="423"/>
        <end position="425"/>
    </location>
</feature>
<feature type="strand" evidence="7">
    <location>
        <begin position="429"/>
        <end position="431"/>
    </location>
</feature>
<feature type="helix" evidence="7">
    <location>
        <begin position="432"/>
        <end position="444"/>
    </location>
</feature>
<feature type="turn" evidence="7">
    <location>
        <begin position="445"/>
        <end position="447"/>
    </location>
</feature>
<feature type="strand" evidence="7">
    <location>
        <begin position="453"/>
        <end position="455"/>
    </location>
</feature>
<feature type="helix" evidence="7">
    <location>
        <begin position="459"/>
        <end position="468"/>
    </location>
</feature>
<feature type="helix" evidence="7">
    <location>
        <begin position="470"/>
        <end position="472"/>
    </location>
</feature>
<feature type="helix" evidence="7">
    <location>
        <begin position="475"/>
        <end position="482"/>
    </location>
</feature>
<feature type="helix" evidence="7">
    <location>
        <begin position="488"/>
        <end position="490"/>
    </location>
</feature>
<feature type="strand" evidence="7">
    <location>
        <begin position="494"/>
        <end position="496"/>
    </location>
</feature>
<feature type="helix" evidence="7">
    <location>
        <begin position="500"/>
        <end position="508"/>
    </location>
</feature>
<feature type="strand" evidence="7">
    <location>
        <begin position="514"/>
        <end position="516"/>
    </location>
</feature>
<feature type="strand" evidence="7">
    <location>
        <begin position="522"/>
        <end position="524"/>
    </location>
</feature>
<feature type="helix" evidence="7">
    <location>
        <begin position="525"/>
        <end position="534"/>
    </location>
</feature>
<feature type="strand" evidence="7">
    <location>
        <begin position="541"/>
        <end position="544"/>
    </location>
</feature>
<feature type="helix" evidence="7">
    <location>
        <begin position="553"/>
        <end position="559"/>
    </location>
</feature>
<feature type="strand" evidence="7">
    <location>
        <begin position="562"/>
        <end position="567"/>
    </location>
</feature>
<feature type="strand" evidence="7">
    <location>
        <begin position="571"/>
        <end position="577"/>
    </location>
</feature>
<feature type="strand" evidence="7">
    <location>
        <begin position="580"/>
        <end position="584"/>
    </location>
</feature>
<feature type="helix" evidence="7">
    <location>
        <begin position="594"/>
        <end position="603"/>
    </location>
</feature>
<feature type="strand" evidence="7">
    <location>
        <begin position="609"/>
        <end position="616"/>
    </location>
</feature>
<feature type="helix" evidence="7">
    <location>
        <begin position="618"/>
        <end position="632"/>
    </location>
</feature>
<feature type="strand" evidence="7">
    <location>
        <begin position="635"/>
        <end position="637"/>
    </location>
</feature>
<feature type="strand" evidence="7">
    <location>
        <begin position="644"/>
        <end position="646"/>
    </location>
</feature>
<comment type="function">
    <text evidence="1 2 5">Terminates transcription on the whole genome. Termination is linked to FttA-mediated RNA cleavage and does not require NTP hydrolysis (PubMed:32094586). Cleaves endonucleolytically at the RNA exit channel of RNA polymerase (RNAP); the 5'-3' exonuclease activity of this protein degrades the nascent RNA released from RNAP (Probable) (PubMed:32094586).</text>
</comment>
<comment type="function">
    <text evidence="2 5">Facilitates transcription termination; addition of this factor to stalled transcription elongation complexes (TEC) promotes nascent transcript cleavage and releases RNA polymerase (RNAP) from DNA in vitro (PubMed:32094586). Transcription termination competes with productive transcription elongation (PubMed:32094586). Termination is stimulated by C-rich transcripts and inhibited by G-rich transcripts; the Spt4-Spt5 complex enhances termination on C-less transcripts (PubMed:32094586). Yields an approximately 100 nucleotide RNA, consistent with endonucleolytic cleavage at the RNA exit channel of RNAP (PubMed:32094586).</text>
</comment>
<comment type="cofactor">
    <cofactor evidence="1">
        <name>Zn(2+)</name>
        <dbReference type="ChEBI" id="CHEBI:29105"/>
    </cofactor>
    <text evidence="1">Binds 2 Zn(2+) ions, which are required for nuclease activity.</text>
</comment>
<comment type="activity regulation">
    <text evidence="2">Transcription termination is stimulated by the Spt4-Spt5 complex (PubMed:32094586). Dipicolinic acid inhibits FttA-mediated termination in vitro and inhibits growth in vivo (PubMed:32094586).</text>
</comment>
<comment type="subunit">
    <text evidence="1 5">Homodimer (By similarity). Probably interacts transiently with RNA polymerase (RNAP), (via at least the RNAP stalk subunits Rpo4 and Rpo7), interacts transiently with the Spt4-Spt5 complex (Probable) (PubMed:32094586).</text>
</comment>
<comment type="disruption phenotype">
    <text evidence="2">Essential, it cannot be deleted, and enzymatically impaired strains of FttA could not be generated (PubMed:32094586). In depletion experiments transcript 3'-UTRs become longer, suggesting transcription termination is altered in vivo (PubMed:32094586).</text>
</comment>
<comment type="miscellaneous">
    <text evidence="2">There are about 2100 +/- 500 molecules of FttA per cell; RNAP is estimated to be present at about 3000 molecules per cell (PubMed:32094586).</text>
</comment>
<comment type="similarity">
    <text evidence="1">Belongs to the metallo-beta-lactamase superfamily. RNA-metabolizing metallo-beta-lactamase-like family. FttA subfamily.</text>
</comment>
<dbReference type="EC" id="3.1.-.-" evidence="1 5"/>
<dbReference type="EMBL" id="AP006878">
    <property type="protein sequence ID" value="BAD85617.1"/>
    <property type="molecule type" value="Genomic_DNA"/>
</dbReference>
<dbReference type="RefSeq" id="WP_011250379.1">
    <property type="nucleotide sequence ID" value="NC_006624.1"/>
</dbReference>
<dbReference type="PDB" id="9BCT">
    <property type="method" value="EM"/>
    <property type="resolution" value="2.50 A"/>
    <property type="chains" value="J/M=1-648"/>
</dbReference>
<dbReference type="PDB" id="9BCU">
    <property type="method" value="EM"/>
    <property type="resolution" value="2.20 A"/>
    <property type="chains" value="J/M=1-648"/>
</dbReference>
<dbReference type="PDBsum" id="9BCT"/>
<dbReference type="PDBsum" id="9BCU"/>
<dbReference type="EMDB" id="EMD-44438"/>
<dbReference type="EMDB" id="EMD-44439"/>
<dbReference type="SMR" id="Q5JH24"/>
<dbReference type="FunCoup" id="Q5JH24">
    <property type="interactions" value="122"/>
</dbReference>
<dbReference type="STRING" id="69014.TK1428"/>
<dbReference type="EnsemblBacteria" id="BAD85617">
    <property type="protein sequence ID" value="BAD85617"/>
    <property type="gene ID" value="TK1428"/>
</dbReference>
<dbReference type="GeneID" id="78447952"/>
<dbReference type="KEGG" id="tko:TK1428"/>
<dbReference type="PATRIC" id="fig|69014.16.peg.1389"/>
<dbReference type="eggNOG" id="arCOG00543">
    <property type="taxonomic scope" value="Archaea"/>
</dbReference>
<dbReference type="HOGENOM" id="CLU_009673_5_1_2"/>
<dbReference type="InParanoid" id="Q5JH24"/>
<dbReference type="OrthoDB" id="7155at2157"/>
<dbReference type="PhylomeDB" id="Q5JH24"/>
<dbReference type="Proteomes" id="UP000000536">
    <property type="component" value="Chromosome"/>
</dbReference>
<dbReference type="GO" id="GO:0003677">
    <property type="term" value="F:DNA binding"/>
    <property type="evidence" value="ECO:0007669"/>
    <property type="project" value="UniProtKB-KW"/>
</dbReference>
<dbReference type="GO" id="GO:0004527">
    <property type="term" value="F:exonuclease activity"/>
    <property type="evidence" value="ECO:0007669"/>
    <property type="project" value="UniProtKB-KW"/>
</dbReference>
<dbReference type="GO" id="GO:0046872">
    <property type="term" value="F:metal ion binding"/>
    <property type="evidence" value="ECO:0007669"/>
    <property type="project" value="UniProtKB-KW"/>
</dbReference>
<dbReference type="GO" id="GO:0003723">
    <property type="term" value="F:RNA binding"/>
    <property type="evidence" value="ECO:0000314"/>
    <property type="project" value="UniProtKB"/>
</dbReference>
<dbReference type="GO" id="GO:0004521">
    <property type="term" value="F:RNA endonuclease activity"/>
    <property type="evidence" value="ECO:0000314"/>
    <property type="project" value="UniProtKB"/>
</dbReference>
<dbReference type="GO" id="GO:0006353">
    <property type="term" value="P:DNA-templated transcription termination"/>
    <property type="evidence" value="ECO:0000314"/>
    <property type="project" value="UniProtKB"/>
</dbReference>
<dbReference type="CDD" id="cd22532">
    <property type="entry name" value="KH-II_CPSF_arch_rpt1"/>
    <property type="match status" value="1"/>
</dbReference>
<dbReference type="CDD" id="cd02410">
    <property type="entry name" value="KH-II_CPSF_arch_rpt2"/>
    <property type="match status" value="1"/>
</dbReference>
<dbReference type="CDD" id="cd16295">
    <property type="entry name" value="TTHA0252-CPSF-like_MBL-fold"/>
    <property type="match status" value="1"/>
</dbReference>
<dbReference type="Gene3D" id="3.30.300.20">
    <property type="match status" value="1"/>
</dbReference>
<dbReference type="Gene3D" id="3.30.300.230">
    <property type="match status" value="1"/>
</dbReference>
<dbReference type="Gene3D" id="3.40.50.10890">
    <property type="match status" value="1"/>
</dbReference>
<dbReference type="Gene3D" id="3.60.15.10">
    <property type="entry name" value="Ribonuclease Z/Hydroxyacylglutathione hydrolase-like"/>
    <property type="match status" value="1"/>
</dbReference>
<dbReference type="HAMAP" id="MF_00870">
    <property type="entry name" value="FttA"/>
    <property type="match status" value="1"/>
</dbReference>
<dbReference type="InterPro" id="IPR019975">
    <property type="entry name" value="aCPSF1"/>
</dbReference>
<dbReference type="InterPro" id="IPR022712">
    <property type="entry name" value="Beta_Casp"/>
</dbReference>
<dbReference type="InterPro" id="IPR004087">
    <property type="entry name" value="KH_dom"/>
</dbReference>
<dbReference type="InterPro" id="IPR015946">
    <property type="entry name" value="KH_dom-like_a/b"/>
</dbReference>
<dbReference type="InterPro" id="IPR009019">
    <property type="entry name" value="KH_sf_prok-type"/>
</dbReference>
<dbReference type="InterPro" id="IPR050698">
    <property type="entry name" value="MBL"/>
</dbReference>
<dbReference type="InterPro" id="IPR001279">
    <property type="entry name" value="Metallo-B-lactamas"/>
</dbReference>
<dbReference type="InterPro" id="IPR036866">
    <property type="entry name" value="RibonucZ/Hydroxyglut_hydro"/>
</dbReference>
<dbReference type="InterPro" id="IPR011108">
    <property type="entry name" value="RMMBL"/>
</dbReference>
<dbReference type="InterPro" id="IPR033769">
    <property type="entry name" value="TffA_KH"/>
</dbReference>
<dbReference type="NCBIfam" id="TIGR03675">
    <property type="entry name" value="arCOG00543"/>
    <property type="match status" value="1"/>
</dbReference>
<dbReference type="PANTHER" id="PTHR11203:SF51">
    <property type="entry name" value="CLEAVAGE AND POLYADENYLATION SPECIFICITY FACTOR"/>
    <property type="match status" value="1"/>
</dbReference>
<dbReference type="PANTHER" id="PTHR11203">
    <property type="entry name" value="CLEAVAGE AND POLYADENYLATION SPECIFICITY FACTOR FAMILY MEMBER"/>
    <property type="match status" value="1"/>
</dbReference>
<dbReference type="Pfam" id="PF10996">
    <property type="entry name" value="Beta-Casp"/>
    <property type="match status" value="1"/>
</dbReference>
<dbReference type="Pfam" id="PF17214">
    <property type="entry name" value="KH_TffA"/>
    <property type="match status" value="1"/>
</dbReference>
<dbReference type="Pfam" id="PF16661">
    <property type="entry name" value="Lactamase_B_6"/>
    <property type="match status" value="1"/>
</dbReference>
<dbReference type="Pfam" id="PF07521">
    <property type="entry name" value="RMMBL"/>
    <property type="match status" value="1"/>
</dbReference>
<dbReference type="SMART" id="SM01027">
    <property type="entry name" value="Beta-Casp"/>
    <property type="match status" value="1"/>
</dbReference>
<dbReference type="SMART" id="SM00322">
    <property type="entry name" value="KH"/>
    <property type="match status" value="1"/>
</dbReference>
<dbReference type="SMART" id="SM00849">
    <property type="entry name" value="Lactamase_B"/>
    <property type="match status" value="1"/>
</dbReference>
<dbReference type="SUPFAM" id="SSF56281">
    <property type="entry name" value="Metallo-hydrolase/oxidoreductase"/>
    <property type="match status" value="1"/>
</dbReference>
<dbReference type="SUPFAM" id="SSF54814">
    <property type="entry name" value="Prokaryotic type KH domain (KH-domain type II)"/>
    <property type="match status" value="1"/>
</dbReference>
<organism>
    <name type="scientific">Thermococcus kodakarensis (strain ATCC BAA-918 / JCM 12380 / KOD1)</name>
    <name type="common">Pyrococcus kodakaraensis (strain KOD1)</name>
    <dbReference type="NCBI Taxonomy" id="69014"/>
    <lineage>
        <taxon>Archaea</taxon>
        <taxon>Methanobacteriati</taxon>
        <taxon>Methanobacteriota</taxon>
        <taxon>Thermococci</taxon>
        <taxon>Thermococcales</taxon>
        <taxon>Thermococcaceae</taxon>
        <taxon>Thermococcus</taxon>
    </lineage>
</organism>
<accession>Q5JH24</accession>
<protein>
    <recommendedName>
        <fullName evidence="1 3">Transcription termination factor FttA</fullName>
        <ecNumber evidence="1 5">3.1.-.-</ecNumber>
    </recommendedName>
    <alternativeName>
        <fullName evidence="3">Factor that terminates transcription in Archaea</fullName>
        <shortName evidence="3">FttA</shortName>
    </alternativeName>
</protein>